<comment type="function">
    <text evidence="2">Plays a role in neurogenesis and brain development. May suppress cell cycle progression in postmitotic neurons by inhibiting G1/S transition.</text>
</comment>
<comment type="subcellular location">
    <subcellularLocation>
        <location evidence="1">Cytoplasm</location>
    </subcellularLocation>
</comment>
<comment type="similarity">
    <text evidence="4">Belongs to the BRINP family.</text>
</comment>
<reference key="1">
    <citation type="submission" date="2003-04" db="EMBL/GenBank/DDBJ databases">
        <authorList>
            <person name="Stubbusch J."/>
        </authorList>
    </citation>
    <scope>NUCLEOTIDE SEQUENCE [MRNA]</scope>
    <source>
        <tissue>Brain</tissue>
    </source>
</reference>
<protein>
    <recommendedName>
        <fullName>BMP/retinoic acid-inducible neural-specific protein 1</fullName>
    </recommendedName>
    <alternativeName>
        <fullName>Deleted in bladder cancer protein 1 homolog</fullName>
    </alternativeName>
</protein>
<name>BRNP1_CHICK</name>
<dbReference type="EMBL" id="AJ558161">
    <property type="protein sequence ID" value="CAD90040.1"/>
    <property type="molecule type" value="mRNA"/>
</dbReference>
<dbReference type="RefSeq" id="NP_989780.1">
    <property type="nucleotide sequence ID" value="NM_204449.2"/>
</dbReference>
<dbReference type="RefSeq" id="XP_046757594.1">
    <property type="nucleotide sequence ID" value="XM_046901638.1"/>
</dbReference>
<dbReference type="RefSeq" id="XP_046784646.1">
    <property type="nucleotide sequence ID" value="XM_046928690.1"/>
</dbReference>
<dbReference type="RefSeq" id="XP_046784647.1">
    <property type="nucleotide sequence ID" value="XM_046928691.1"/>
</dbReference>
<dbReference type="FunCoup" id="Q7ZZR3">
    <property type="interactions" value="186"/>
</dbReference>
<dbReference type="STRING" id="9031.ENSGALP00000011314"/>
<dbReference type="GlyCosmos" id="Q7ZZR3">
    <property type="glycosylation" value="7 sites, No reported glycans"/>
</dbReference>
<dbReference type="GlyGen" id="Q7ZZR3">
    <property type="glycosylation" value="7 sites"/>
</dbReference>
<dbReference type="PaxDb" id="9031-ENSGALP00000011314"/>
<dbReference type="GeneID" id="395098"/>
<dbReference type="KEGG" id="gga:395098"/>
<dbReference type="CTD" id="1620"/>
<dbReference type="VEuPathDB" id="HostDB:geneid_395098"/>
<dbReference type="eggNOG" id="ENOG502QT9H">
    <property type="taxonomic scope" value="Eukaryota"/>
</dbReference>
<dbReference type="HOGENOM" id="CLU_018347_0_0_1"/>
<dbReference type="InParanoid" id="Q7ZZR3"/>
<dbReference type="OMA" id="MSESWAS"/>
<dbReference type="OrthoDB" id="8503728at2759"/>
<dbReference type="PhylomeDB" id="Q7ZZR3"/>
<dbReference type="TreeFam" id="TF331600"/>
<dbReference type="PRO" id="PR:Q7ZZR3"/>
<dbReference type="Proteomes" id="UP000000539">
    <property type="component" value="Chromosome 17"/>
</dbReference>
<dbReference type="Bgee" id="ENSGALG00000006997">
    <property type="expression patterns" value="Expressed in cerebellum and 3 other cell types or tissues"/>
</dbReference>
<dbReference type="GO" id="GO:0005737">
    <property type="term" value="C:cytoplasm"/>
    <property type="evidence" value="ECO:0000250"/>
    <property type="project" value="UniProtKB"/>
</dbReference>
<dbReference type="GO" id="GO:0030425">
    <property type="term" value="C:dendrite"/>
    <property type="evidence" value="ECO:0000318"/>
    <property type="project" value="GO_Central"/>
</dbReference>
<dbReference type="GO" id="GO:0043025">
    <property type="term" value="C:neuronal cell body"/>
    <property type="evidence" value="ECO:0000318"/>
    <property type="project" value="GO_Central"/>
</dbReference>
<dbReference type="GO" id="GO:0071300">
    <property type="term" value="P:cellular response to retinoic acid"/>
    <property type="evidence" value="ECO:0000318"/>
    <property type="project" value="GO_Central"/>
</dbReference>
<dbReference type="GO" id="GO:0021953">
    <property type="term" value="P:central nervous system neuron differentiation"/>
    <property type="evidence" value="ECO:0000318"/>
    <property type="project" value="GO_Central"/>
</dbReference>
<dbReference type="GO" id="GO:0045930">
    <property type="term" value="P:negative regulation of mitotic cell cycle"/>
    <property type="evidence" value="ECO:0000318"/>
    <property type="project" value="GO_Central"/>
</dbReference>
<dbReference type="GO" id="GO:0045666">
    <property type="term" value="P:positive regulation of neuron differentiation"/>
    <property type="evidence" value="ECO:0007669"/>
    <property type="project" value="InterPro"/>
</dbReference>
<dbReference type="InterPro" id="IPR033237">
    <property type="entry name" value="BRINP"/>
</dbReference>
<dbReference type="InterPro" id="IPR020864">
    <property type="entry name" value="MACPF"/>
</dbReference>
<dbReference type="PANTHER" id="PTHR15564:SF7">
    <property type="entry name" value="BMP_RETINOIC ACID-INDUCIBLE NEURAL-SPECIFIC PROTEIN 1"/>
    <property type="match status" value="1"/>
</dbReference>
<dbReference type="PANTHER" id="PTHR15564">
    <property type="entry name" value="MACPF DOMAIN-CONTAINING PROTEIN"/>
    <property type="match status" value="1"/>
</dbReference>
<dbReference type="Pfam" id="PF19052">
    <property type="entry name" value="BRINP"/>
    <property type="match status" value="1"/>
</dbReference>
<dbReference type="Pfam" id="PF25415">
    <property type="entry name" value="EGF_BRNP1-3"/>
    <property type="match status" value="1"/>
</dbReference>
<dbReference type="Pfam" id="PF01823">
    <property type="entry name" value="MACPF"/>
    <property type="match status" value="1"/>
</dbReference>
<dbReference type="SMART" id="SM00457">
    <property type="entry name" value="MACPF"/>
    <property type="match status" value="1"/>
</dbReference>
<feature type="signal peptide" evidence="3">
    <location>
        <begin position="1"/>
        <end position="22"/>
    </location>
</feature>
<feature type="chain" id="PRO_0000045769" description="BMP/retinoic acid-inducible neural-specific protein 1">
    <location>
        <begin position="23"/>
        <end position="761"/>
    </location>
</feature>
<feature type="domain" description="MACPF">
    <location>
        <begin position="68"/>
        <end position="251"/>
    </location>
</feature>
<feature type="glycosylation site" description="N-linked (GlcNAc...) asparagine" evidence="3">
    <location>
        <position position="156"/>
    </location>
</feature>
<feature type="glycosylation site" description="N-linked (GlcNAc...) asparagine" evidence="3">
    <location>
        <position position="433"/>
    </location>
</feature>
<feature type="glycosylation site" description="N-linked (GlcNAc...) asparagine" evidence="3">
    <location>
        <position position="443"/>
    </location>
</feature>
<feature type="glycosylation site" description="N-linked (GlcNAc...) asparagine" evidence="3">
    <location>
        <position position="553"/>
    </location>
</feature>
<feature type="glycosylation site" description="N-linked (GlcNAc...) asparagine" evidence="3">
    <location>
        <position position="599"/>
    </location>
</feature>
<feature type="glycosylation site" description="N-linked (GlcNAc...) asparagine" evidence="3">
    <location>
        <position position="631"/>
    </location>
</feature>
<feature type="glycosylation site" description="N-linked (GlcNAc...) asparagine" evidence="3">
    <location>
        <position position="677"/>
    </location>
</feature>
<keyword id="KW-0131">Cell cycle</keyword>
<keyword id="KW-0963">Cytoplasm</keyword>
<keyword id="KW-0325">Glycoprotein</keyword>
<keyword id="KW-0338">Growth arrest</keyword>
<keyword id="KW-0524">Neurogenesis</keyword>
<keyword id="KW-1185">Reference proteome</keyword>
<keyword id="KW-0732">Signal</keyword>
<evidence type="ECO:0000250" key="1">
    <source>
        <dbReference type="UniProtKB" id="O60477"/>
    </source>
</evidence>
<evidence type="ECO:0000250" key="2">
    <source>
        <dbReference type="UniProtKB" id="Q920P3"/>
    </source>
</evidence>
<evidence type="ECO:0000255" key="3"/>
<evidence type="ECO:0000305" key="4"/>
<gene>
    <name type="primary">BRINP1</name>
    <name type="synonym">BRINP</name>
    <name type="synonym">DBC1</name>
    <name type="synonym">FAM5A</name>
</gene>
<accession>Q7ZZR3</accession>
<proteinExistence type="evidence at transcript level"/>
<organism>
    <name type="scientific">Gallus gallus</name>
    <name type="common">Chicken</name>
    <dbReference type="NCBI Taxonomy" id="9031"/>
    <lineage>
        <taxon>Eukaryota</taxon>
        <taxon>Metazoa</taxon>
        <taxon>Chordata</taxon>
        <taxon>Craniata</taxon>
        <taxon>Vertebrata</taxon>
        <taxon>Euteleostomi</taxon>
        <taxon>Archelosauria</taxon>
        <taxon>Archosauria</taxon>
        <taxon>Dinosauria</taxon>
        <taxon>Saurischia</taxon>
        <taxon>Theropoda</taxon>
        <taxon>Coelurosauria</taxon>
        <taxon>Aves</taxon>
        <taxon>Neognathae</taxon>
        <taxon>Galloanserae</taxon>
        <taxon>Galliformes</taxon>
        <taxon>Phasianidae</taxon>
        <taxon>Phasianinae</taxon>
        <taxon>Gallus</taxon>
    </lineage>
</organism>
<sequence>MNWRLVEFLYLLFIWDHILVQPSHQDPAATNQHVSKEFDWLISDRGPFHHSRSYLSFVERHRQGFTTRYKIYREFARWKVRNTAIERRDLLHNPLPLMPEFQRSIRLLGRRPTTQQFIDTIIKKYGTHILISATLGGEEALTMYMDKSRLDRKSGNATQSVEALHQLASSYFVDRDGTMRRLHEIQISTGAIKVTETRTGPLGCNSYDNLDSVSSVLLQSTESKLHLQGLQIIFPQYLQEKFVQSALSYIMCNGEGEYICRNSQCGCQCAEEFPQCNCPITDIQIMEYTLANMAKTWTEAYKDLENSDEFKSFMKRLPSNHFLTIASIHQHWGNDWDLQNRYKLLQSSLEAQRQKIQRTARKLFGLSVRCRHNPNHQLPRERTIQEWLTRVQSLLYCNENGFWGTFLESQRSCVCHGGTSLCQRPIPCIIGGNNSCAMCSLANISLCGSCNKGYKLYRGRCEPQNVDSERSEQFISFETDLDFQDLELKYLLQKMDSRLYVHTTFISNEIRLDTFFDPRWRKRMSLTLKSNKNRMDFIHMVIGISMRICQMRNSSLDPMFFVYVNPFSGSHSEGWNMPFGEYGYPRWEKIRLQNSQCYNWTLLLGNRWKTFFETVHIYLRSRTRLPSLLRNETGQGPVDLSDPSKRQFYIKISDVQVYGYSLRFNADLLRSAVQQVNQSYTQGGQFYSSSSVMLLLLDIRDRINRLAPPVAPGKPQLDLFSCMLKHRLKLTNSEIIRVNHALDLYNTEILKQSDQMTAKLC</sequence>